<evidence type="ECO:0000250" key="1"/>
<evidence type="ECO:0000255" key="2">
    <source>
        <dbReference type="PROSITE-ProRule" id="PRU00227"/>
    </source>
</evidence>
<evidence type="ECO:0000256" key="3">
    <source>
        <dbReference type="SAM" id="MobiDB-lite"/>
    </source>
</evidence>
<organism>
    <name type="scientific">Eremothecium gossypii (strain ATCC 10895 / CBS 109.51 / FGSC 9923 / NRRL Y-1056)</name>
    <name type="common">Yeast</name>
    <name type="synonym">Ashbya gossypii</name>
    <dbReference type="NCBI Taxonomy" id="284811"/>
    <lineage>
        <taxon>Eukaryota</taxon>
        <taxon>Fungi</taxon>
        <taxon>Dikarya</taxon>
        <taxon>Ascomycota</taxon>
        <taxon>Saccharomycotina</taxon>
        <taxon>Saccharomycetes</taxon>
        <taxon>Saccharomycetales</taxon>
        <taxon>Saccharomycetaceae</taxon>
        <taxon>Eremothecium</taxon>
    </lineage>
</organism>
<reference key="1">
    <citation type="journal article" date="2004" name="Science">
        <title>The Ashbya gossypii genome as a tool for mapping the ancient Saccharomyces cerevisiae genome.</title>
        <authorList>
            <person name="Dietrich F.S."/>
            <person name="Voegeli S."/>
            <person name="Brachat S."/>
            <person name="Lerch A."/>
            <person name="Gates K."/>
            <person name="Steiner S."/>
            <person name="Mohr C."/>
            <person name="Poehlmann R."/>
            <person name="Luedi P."/>
            <person name="Choi S."/>
            <person name="Wing R.A."/>
            <person name="Flavier A."/>
            <person name="Gaffney T.D."/>
            <person name="Philippsen P."/>
        </authorList>
    </citation>
    <scope>NUCLEOTIDE SEQUENCE [LARGE SCALE GENOMIC DNA]</scope>
    <source>
        <strain>ATCC 10895 / CBS 109.51 / FGSC 9923 / NRRL Y-1056</strain>
    </source>
</reference>
<reference key="2">
    <citation type="journal article" date="2013" name="G3 (Bethesda)">
        <title>Genomes of Ashbya fungi isolated from insects reveal four mating-type loci, numerous translocations, lack of transposons, and distinct gene duplications.</title>
        <authorList>
            <person name="Dietrich F.S."/>
            <person name="Voegeli S."/>
            <person name="Kuo S."/>
            <person name="Philippsen P."/>
        </authorList>
    </citation>
    <scope>GENOME REANNOTATION</scope>
    <source>
        <strain>ATCC 10895 / CBS 109.51 / FGSC 9923 / NRRL Y-1056</strain>
    </source>
</reference>
<protein>
    <recommendedName>
        <fullName>Putative transcription factor SEF1</fullName>
    </recommendedName>
    <alternativeName>
        <fullName>Suppressor protein SEF1 homolog</fullName>
    </alternativeName>
</protein>
<accession>Q74Z37</accession>
<proteinExistence type="inferred from homology"/>
<comment type="function">
    <text evidence="1">Putative transcription factor.</text>
</comment>
<comment type="subcellular location">
    <subcellularLocation>
        <location evidence="2">Nucleus</location>
    </subcellularLocation>
</comment>
<gene>
    <name type="primary">SEF1</name>
    <name type="ordered locus">AGR369W</name>
</gene>
<feature type="chain" id="PRO_0000114975" description="Putative transcription factor SEF1">
    <location>
        <begin position="1"/>
        <end position="1051"/>
    </location>
</feature>
<feature type="DNA-binding region" description="Zn(2)-C6 fungal-type" evidence="2">
    <location>
        <begin position="92"/>
        <end position="122"/>
    </location>
</feature>
<feature type="region of interest" description="Disordered" evidence="3">
    <location>
        <begin position="1"/>
        <end position="54"/>
    </location>
</feature>
<feature type="region of interest" description="Disordered" evidence="3">
    <location>
        <begin position="67"/>
        <end position="90"/>
    </location>
</feature>
<feature type="region of interest" description="Disordered" evidence="3">
    <location>
        <begin position="206"/>
        <end position="227"/>
    </location>
</feature>
<feature type="region of interest" description="Disordered" evidence="3">
    <location>
        <begin position="738"/>
        <end position="759"/>
    </location>
</feature>
<feature type="region of interest" description="Disordered" evidence="3">
    <location>
        <begin position="927"/>
        <end position="968"/>
    </location>
</feature>
<feature type="compositionally biased region" description="Basic and acidic residues" evidence="3">
    <location>
        <begin position="1"/>
        <end position="10"/>
    </location>
</feature>
<feature type="compositionally biased region" description="Low complexity" evidence="3">
    <location>
        <begin position="11"/>
        <end position="21"/>
    </location>
</feature>
<feature type="compositionally biased region" description="Low complexity" evidence="3">
    <location>
        <begin position="206"/>
        <end position="218"/>
    </location>
</feature>
<dbReference type="EMBL" id="AE016820">
    <property type="protein sequence ID" value="AAS54859.1"/>
    <property type="molecule type" value="Genomic_DNA"/>
</dbReference>
<dbReference type="RefSeq" id="NP_987035.1">
    <property type="nucleotide sequence ID" value="NM_212097.1"/>
</dbReference>
<dbReference type="FunCoup" id="Q74Z37">
    <property type="interactions" value="145"/>
</dbReference>
<dbReference type="STRING" id="284811.Q74Z37"/>
<dbReference type="EnsemblFungi" id="AAS54859">
    <property type="protein sequence ID" value="AAS54859"/>
    <property type="gene ID" value="AGOS_AGR369W"/>
</dbReference>
<dbReference type="GeneID" id="4623338"/>
<dbReference type="KEGG" id="ago:AGOS_AGR369W"/>
<dbReference type="eggNOG" id="ENOG502QR4T">
    <property type="taxonomic scope" value="Eukaryota"/>
</dbReference>
<dbReference type="HOGENOM" id="CLU_010150_0_0_1"/>
<dbReference type="InParanoid" id="Q74Z37"/>
<dbReference type="OMA" id="LVWCVHE"/>
<dbReference type="OrthoDB" id="3163292at2759"/>
<dbReference type="Proteomes" id="UP000000591">
    <property type="component" value="Chromosome VII"/>
</dbReference>
<dbReference type="GO" id="GO:0005634">
    <property type="term" value="C:nucleus"/>
    <property type="evidence" value="ECO:0000318"/>
    <property type="project" value="GO_Central"/>
</dbReference>
<dbReference type="GO" id="GO:0000981">
    <property type="term" value="F:DNA-binding transcription factor activity, RNA polymerase II-specific"/>
    <property type="evidence" value="ECO:0000318"/>
    <property type="project" value="GO_Central"/>
</dbReference>
<dbReference type="GO" id="GO:0000976">
    <property type="term" value="F:transcription cis-regulatory region binding"/>
    <property type="evidence" value="ECO:0000318"/>
    <property type="project" value="GO_Central"/>
</dbReference>
<dbReference type="GO" id="GO:0008270">
    <property type="term" value="F:zinc ion binding"/>
    <property type="evidence" value="ECO:0007669"/>
    <property type="project" value="InterPro"/>
</dbReference>
<dbReference type="GO" id="GO:0006351">
    <property type="term" value="P:DNA-templated transcription"/>
    <property type="evidence" value="ECO:0007669"/>
    <property type="project" value="InterPro"/>
</dbReference>
<dbReference type="GO" id="GO:0006355">
    <property type="term" value="P:regulation of DNA-templated transcription"/>
    <property type="evidence" value="ECO:0000318"/>
    <property type="project" value="GO_Central"/>
</dbReference>
<dbReference type="CDD" id="cd12148">
    <property type="entry name" value="fungal_TF_MHR"/>
    <property type="match status" value="1"/>
</dbReference>
<dbReference type="CDD" id="cd00067">
    <property type="entry name" value="GAL4"/>
    <property type="match status" value="1"/>
</dbReference>
<dbReference type="FunFam" id="4.10.240.10:FF:000003">
    <property type="entry name" value="C6 transcription factor (Leu3)"/>
    <property type="match status" value="1"/>
</dbReference>
<dbReference type="Gene3D" id="4.10.240.10">
    <property type="entry name" value="Zn(2)-C6 fungal-type DNA-binding domain"/>
    <property type="match status" value="1"/>
</dbReference>
<dbReference type="InterPro" id="IPR051089">
    <property type="entry name" value="prtT"/>
</dbReference>
<dbReference type="InterPro" id="IPR007219">
    <property type="entry name" value="Transcription_factor_dom_fun"/>
</dbReference>
<dbReference type="InterPro" id="IPR036864">
    <property type="entry name" value="Zn2-C6_fun-type_DNA-bd_sf"/>
</dbReference>
<dbReference type="InterPro" id="IPR001138">
    <property type="entry name" value="Zn2Cys6_DnaBD"/>
</dbReference>
<dbReference type="PANTHER" id="PTHR31845">
    <property type="entry name" value="FINGER DOMAIN PROTEIN, PUTATIVE-RELATED"/>
    <property type="match status" value="1"/>
</dbReference>
<dbReference type="PANTHER" id="PTHR31845:SF6">
    <property type="entry name" value="TRANSCRIPTION FACTOR SEF1-RELATED"/>
    <property type="match status" value="1"/>
</dbReference>
<dbReference type="Pfam" id="PF04082">
    <property type="entry name" value="Fungal_trans"/>
    <property type="match status" value="1"/>
</dbReference>
<dbReference type="Pfam" id="PF00172">
    <property type="entry name" value="Zn_clus"/>
    <property type="match status" value="1"/>
</dbReference>
<dbReference type="SMART" id="SM00066">
    <property type="entry name" value="GAL4"/>
    <property type="match status" value="1"/>
</dbReference>
<dbReference type="SUPFAM" id="SSF57701">
    <property type="entry name" value="Zn2/Cys6 DNA-binding domain"/>
    <property type="match status" value="1"/>
</dbReference>
<dbReference type="PROSITE" id="PS00463">
    <property type="entry name" value="ZN2_CY6_FUNGAL_1"/>
    <property type="match status" value="1"/>
</dbReference>
<dbReference type="PROSITE" id="PS50048">
    <property type="entry name" value="ZN2_CY6_FUNGAL_2"/>
    <property type="match status" value="1"/>
</dbReference>
<name>SEF1_EREGS</name>
<keyword id="KW-0238">DNA-binding</keyword>
<keyword id="KW-0479">Metal-binding</keyword>
<keyword id="KW-0539">Nucleus</keyword>
<keyword id="KW-1185">Reference proteome</keyword>
<keyword id="KW-0804">Transcription</keyword>
<keyword id="KW-0805">Transcription regulation</keyword>
<keyword id="KW-0862">Zinc</keyword>
<sequence length="1051" mass="115375">MSTDVSERGAEAGSSSGLLSSPCVGDGSDSAQMKKRNTETAGMKARKKLRSEESGLSTLVSIASFGGQASPDRSKVSKQQNGASGHRPVTSCTHCRQHKIKCNASENFPSSCSRCERMGLQCEIDPQFRPKKGSQLQNLKNEIEELKTKLEFLLRSEGILSSAMRNSDLGRQILQAIKLQDSPQQQTGISVQTYLASEPELLKSESSVKSSVNTPSGSYSASAVDVSRAKTNSVPPLLNDSAPANSNRESLPPVLQMALKYHNSSHNTPIDTPSSHTTPMLSPEVKKPVVATTNAMPLLPSPYANIDEFVLGDVHIPIDKAKELHHIFVKKYLPYFPIMTTDSVTELYSQSQLLFWTIMLTACLSDPEPTLYNSLASLIKQLAIETCWIRTPRSTHISQALLILCNWPLPNQKVLDDCSYRFVGLAKSLSFQLGLHRGEFMSEFTRTQTLMPDAEKWRTRTWLGIFFAEQCWSSILGLPSTSQTDYFIEQARRGKFDLPVRFHRLLCLAHFQASLSNIMGSSVESPDGLMDAKERGSSLAALERELARLHSELKFDSDPVVEMYYLYAKLMIYCFAFLPETPKADQTQYVTEAYLAATRIITLLTKTLEDTQLIELPIYVRQSVTYAALILFKLHLTPYLPEKYVDSARQSIVTVHRLYRNQLTAWATGVENDISRTASVLEKLNFVLITYPEIFVEEDGIISRMRSHLTGTLFYDLIYCVHEARRRQVDSEYNEMLEKNRKEQPVHTAATGSQDTEKRAPKRRLFPLPFYNQISKEDFETITQTTPGGTTVTTLVPTKNAILQAKKLQRSQGGQKGEPIRSINGIPLAMLDATGSVNGALVGDNLNSSVPQAAVAASAPPEPAAVAATVPPEPAPAPGGQSYPLFQPLYVQPAANVPMQRSASASVAEALPFRRPGMPKITSESIASGNPNSLFGNDGSPFPAIAQKSAKPAPPAKPDGQPAKQPAPYPNLNVFLGANASARMASYSSLMDAADPLAPDPDRAPLAAPGPLAHISELDSFFLQQSAGWIEGSSSNDDFLGWYDINMAPEF</sequence>